<protein>
    <recommendedName>
        <fullName evidence="3">Small ribosomal subunit protein RACK1</fullName>
    </recommendedName>
    <alternativeName>
        <fullName>Cross-pathway control WD-repeat protein cpc-2</fullName>
    </alternativeName>
    <alternativeName>
        <fullName>Guanine nucleotide-binding protein subunit beta-like protein</fullName>
    </alternativeName>
</protein>
<keyword id="KW-0002">3D-structure</keyword>
<keyword id="KW-0963">Cytoplasm</keyword>
<keyword id="KW-1185">Reference proteome</keyword>
<keyword id="KW-0677">Repeat</keyword>
<keyword id="KW-0687">Ribonucleoprotein</keyword>
<keyword id="KW-0689">Ribosomal protein</keyword>
<keyword id="KW-0853">WD repeat</keyword>
<accession>Q01369</accession>
<accession>Q7S5N3</accession>
<dbReference type="EMBL" id="X81875">
    <property type="protein sequence ID" value="CAA57460.1"/>
    <property type="molecule type" value="Genomic_DNA"/>
</dbReference>
<dbReference type="EMBL" id="CM002242">
    <property type="protein sequence ID" value="EAA30834.1"/>
    <property type="molecule type" value="Genomic_DNA"/>
</dbReference>
<dbReference type="PIR" id="S57839">
    <property type="entry name" value="S57839"/>
</dbReference>
<dbReference type="RefSeq" id="XP_960070.1">
    <property type="nucleotide sequence ID" value="XM_954977.3"/>
</dbReference>
<dbReference type="PDB" id="7R81">
    <property type="method" value="EM"/>
    <property type="resolution" value="2.70 A"/>
    <property type="chains" value="h2=1-316"/>
</dbReference>
<dbReference type="PDBsum" id="7R81"/>
<dbReference type="EMDB" id="EMD-24307"/>
<dbReference type="SMR" id="Q01369"/>
<dbReference type="FunCoup" id="Q01369">
    <property type="interactions" value="1281"/>
</dbReference>
<dbReference type="STRING" id="367110.Q01369"/>
<dbReference type="PaxDb" id="5141-EFNCRP00000005670"/>
<dbReference type="EnsemblFungi" id="EAA30834">
    <property type="protein sequence ID" value="EAA30834"/>
    <property type="gene ID" value="NCU05810"/>
</dbReference>
<dbReference type="GeneID" id="3876201"/>
<dbReference type="KEGG" id="ncr:NCU05810"/>
<dbReference type="HOGENOM" id="CLU_000288_57_7_1"/>
<dbReference type="InParanoid" id="Q01369"/>
<dbReference type="OrthoDB" id="7875889at2759"/>
<dbReference type="Proteomes" id="UP000001805">
    <property type="component" value="Chromosome 7, Linkage Group VII"/>
</dbReference>
<dbReference type="GO" id="GO:0005829">
    <property type="term" value="C:cytosol"/>
    <property type="evidence" value="ECO:0000318"/>
    <property type="project" value="GO_Central"/>
</dbReference>
<dbReference type="GO" id="GO:0022627">
    <property type="term" value="C:cytosolic small ribosomal subunit"/>
    <property type="evidence" value="ECO:0007669"/>
    <property type="project" value="EnsemblFungi"/>
</dbReference>
<dbReference type="GO" id="GO:0005634">
    <property type="term" value="C:nucleus"/>
    <property type="evidence" value="ECO:0000318"/>
    <property type="project" value="GO_Central"/>
</dbReference>
<dbReference type="GO" id="GO:0001965">
    <property type="term" value="F:G-protein alpha-subunit binding"/>
    <property type="evidence" value="ECO:0007669"/>
    <property type="project" value="EnsemblFungi"/>
</dbReference>
<dbReference type="GO" id="GO:0005092">
    <property type="term" value="F:GDP-dissociation inhibitor activity"/>
    <property type="evidence" value="ECO:0007669"/>
    <property type="project" value="EnsemblFungi"/>
</dbReference>
<dbReference type="GO" id="GO:0005080">
    <property type="term" value="F:protein kinase C binding"/>
    <property type="evidence" value="ECO:0000318"/>
    <property type="project" value="GO_Central"/>
</dbReference>
<dbReference type="GO" id="GO:0043495">
    <property type="term" value="F:protein-membrane adaptor activity"/>
    <property type="evidence" value="ECO:0007669"/>
    <property type="project" value="EnsemblFungi"/>
</dbReference>
<dbReference type="GO" id="GO:0043022">
    <property type="term" value="F:ribosome binding"/>
    <property type="evidence" value="ECO:0000318"/>
    <property type="project" value="GO_Central"/>
</dbReference>
<dbReference type="GO" id="GO:0030546">
    <property type="term" value="F:signaling receptor activator activity"/>
    <property type="evidence" value="ECO:0007669"/>
    <property type="project" value="EnsemblFungi"/>
</dbReference>
<dbReference type="GO" id="GO:0003735">
    <property type="term" value="F:structural constituent of ribosome"/>
    <property type="evidence" value="ECO:0007669"/>
    <property type="project" value="EnsemblFungi"/>
</dbReference>
<dbReference type="GO" id="GO:0045182">
    <property type="term" value="F:translation regulator activity"/>
    <property type="evidence" value="ECO:0007669"/>
    <property type="project" value="InterPro"/>
</dbReference>
<dbReference type="GO" id="GO:0007186">
    <property type="term" value="P:G protein-coupled receptor signaling pathway"/>
    <property type="evidence" value="ECO:0007669"/>
    <property type="project" value="EnsemblFungi"/>
</dbReference>
<dbReference type="GO" id="GO:0140469">
    <property type="term" value="P:GCN2-mediated signaling"/>
    <property type="evidence" value="ECO:0007669"/>
    <property type="project" value="EnsemblFungi"/>
</dbReference>
<dbReference type="GO" id="GO:1990145">
    <property type="term" value="P:maintenance of translational fidelity"/>
    <property type="evidence" value="ECO:0007669"/>
    <property type="project" value="EnsemblFungi"/>
</dbReference>
<dbReference type="GO" id="GO:0061157">
    <property type="term" value="P:mRNA destabilization"/>
    <property type="evidence" value="ECO:0007669"/>
    <property type="project" value="EnsemblFungi"/>
</dbReference>
<dbReference type="GO" id="GO:1903138">
    <property type="term" value="P:negative regulation of cell integrity MAPK cascade"/>
    <property type="evidence" value="ECO:0007669"/>
    <property type="project" value="EnsemblFungi"/>
</dbReference>
<dbReference type="GO" id="GO:1902660">
    <property type="term" value="P:negative regulation of glucose mediated signaling pathway"/>
    <property type="evidence" value="ECO:0007669"/>
    <property type="project" value="EnsemblFungi"/>
</dbReference>
<dbReference type="GO" id="GO:1903753">
    <property type="term" value="P:negative regulation of p38MAPK cascade"/>
    <property type="evidence" value="ECO:0007669"/>
    <property type="project" value="EnsemblFungi"/>
</dbReference>
<dbReference type="GO" id="GO:2001125">
    <property type="term" value="P:negative regulation of translational frameshifting"/>
    <property type="evidence" value="ECO:0000318"/>
    <property type="project" value="GO_Central"/>
</dbReference>
<dbReference type="GO" id="GO:0070651">
    <property type="term" value="P:nonfunctional rRNA decay"/>
    <property type="evidence" value="ECO:0007669"/>
    <property type="project" value="EnsemblFungi"/>
</dbReference>
<dbReference type="GO" id="GO:0010508">
    <property type="term" value="P:positive regulation of autophagy"/>
    <property type="evidence" value="ECO:0007669"/>
    <property type="project" value="EnsemblFungi"/>
</dbReference>
<dbReference type="GO" id="GO:0031139">
    <property type="term" value="P:positive regulation of conjugation with cellular fusion"/>
    <property type="evidence" value="ECO:0007669"/>
    <property type="project" value="EnsemblFungi"/>
</dbReference>
<dbReference type="GO" id="GO:0006521">
    <property type="term" value="P:regulation of amino acid metabolic process"/>
    <property type="evidence" value="ECO:0007669"/>
    <property type="project" value="EnsemblFungi"/>
</dbReference>
<dbReference type="GO" id="GO:2000765">
    <property type="term" value="P:regulation of cytoplasmic translation"/>
    <property type="evidence" value="ECO:0007669"/>
    <property type="project" value="EnsemblFungi"/>
</dbReference>
<dbReference type="GO" id="GO:0072344">
    <property type="term" value="P:rescue of stalled ribosome"/>
    <property type="evidence" value="ECO:0000318"/>
    <property type="project" value="GO_Central"/>
</dbReference>
<dbReference type="GO" id="GO:0141014">
    <property type="term" value="P:ribosome hibernation"/>
    <property type="evidence" value="ECO:0007669"/>
    <property type="project" value="EnsemblFungi"/>
</dbReference>
<dbReference type="GO" id="GO:1990116">
    <property type="term" value="P:ribosome-associated ubiquitin-dependent protein catabolic process"/>
    <property type="evidence" value="ECO:0007669"/>
    <property type="project" value="EnsemblFungi"/>
</dbReference>
<dbReference type="CDD" id="cd00200">
    <property type="entry name" value="WD40"/>
    <property type="match status" value="1"/>
</dbReference>
<dbReference type="FunFam" id="2.130.10.10:FF:000039">
    <property type="entry name" value="Guanine nucleotide-binding protein subunit beta-like protein"/>
    <property type="match status" value="1"/>
</dbReference>
<dbReference type="Gene3D" id="2.130.10.10">
    <property type="entry name" value="YVTN repeat-like/Quinoprotein amine dehydrogenase"/>
    <property type="match status" value="1"/>
</dbReference>
<dbReference type="InterPro" id="IPR020472">
    <property type="entry name" value="G-protein_beta_WD-40_rep"/>
</dbReference>
<dbReference type="InterPro" id="IPR045223">
    <property type="entry name" value="RACK1-like"/>
</dbReference>
<dbReference type="InterPro" id="IPR015943">
    <property type="entry name" value="WD40/YVTN_repeat-like_dom_sf"/>
</dbReference>
<dbReference type="InterPro" id="IPR019775">
    <property type="entry name" value="WD40_repeat_CS"/>
</dbReference>
<dbReference type="InterPro" id="IPR036322">
    <property type="entry name" value="WD40_repeat_dom_sf"/>
</dbReference>
<dbReference type="InterPro" id="IPR001680">
    <property type="entry name" value="WD40_rpt"/>
</dbReference>
<dbReference type="PANTHER" id="PTHR19868">
    <property type="entry name" value="RECEPTOR FOR ACTIVATED PROTEIN KINASE C RACK1"/>
    <property type="match status" value="1"/>
</dbReference>
<dbReference type="Pfam" id="PF00400">
    <property type="entry name" value="WD40"/>
    <property type="match status" value="7"/>
</dbReference>
<dbReference type="PRINTS" id="PR00320">
    <property type="entry name" value="GPROTEINBRPT"/>
</dbReference>
<dbReference type="SMART" id="SM00320">
    <property type="entry name" value="WD40"/>
    <property type="match status" value="7"/>
</dbReference>
<dbReference type="SUPFAM" id="SSF50978">
    <property type="entry name" value="WD40 repeat-like"/>
    <property type="match status" value="1"/>
</dbReference>
<dbReference type="PROSITE" id="PS00678">
    <property type="entry name" value="WD_REPEATS_1"/>
    <property type="match status" value="5"/>
</dbReference>
<dbReference type="PROSITE" id="PS50082">
    <property type="entry name" value="WD_REPEATS_2"/>
    <property type="match status" value="6"/>
</dbReference>
<dbReference type="PROSITE" id="PS50294">
    <property type="entry name" value="WD_REPEATS_REGION"/>
    <property type="match status" value="1"/>
</dbReference>
<feature type="chain" id="PRO_0000127756" description="Small ribosomal subunit protein RACK1">
    <location>
        <begin position="1"/>
        <end position="316"/>
    </location>
</feature>
<feature type="repeat" description="WD 1">
    <location>
        <begin position="13"/>
        <end position="44"/>
    </location>
</feature>
<feature type="repeat" description="WD 2">
    <location>
        <begin position="61"/>
        <end position="91"/>
    </location>
</feature>
<feature type="repeat" description="WD 3">
    <location>
        <begin position="103"/>
        <end position="133"/>
    </location>
</feature>
<feature type="repeat" description="WD 4">
    <location>
        <begin position="146"/>
        <end position="178"/>
    </location>
</feature>
<feature type="repeat" description="WD 5">
    <location>
        <begin position="190"/>
        <end position="220"/>
    </location>
</feature>
<feature type="repeat" description="WD 6">
    <location>
        <begin position="231"/>
        <end position="260"/>
    </location>
</feature>
<feature type="repeat" description="WD 7">
    <location>
        <begin position="281"/>
        <end position="311"/>
    </location>
</feature>
<feature type="sequence conflict" description="In Ref. 2; EAA30834." evidence="4" ref="2">
    <original>T</original>
    <variation>S</variation>
    <location>
        <position position="128"/>
    </location>
</feature>
<sequence>MAEQLILKGTLEGHNGWVTSLATSLENPNMLLSGSRDKSLIIWNLTRDETSYGYPKRRLHGHSHIVSDCVISSDGAYALSASWDKTLRLWELSTGTTTRRFVGHTNDVLSVSFSADNRQIVSGSRDRTIKLWNTLGDCKFTITEKGHTEWVSCVRFSPNPQNPVIVSSGWDKLVKVWELSSCKLQTDHIGHTGYINAVTISPDGSLCASGGKDGTTMLWDLNESKHLYSLNANDEIHALVFSPNRYWLCAATSSSIIIFDLEKKSKVDELKPEFQNIGKKSREPECVSLAWSADGQTLFAGYTDNIIRAWGVMSRA</sequence>
<organism>
    <name type="scientific">Neurospora crassa (strain ATCC 24698 / 74-OR23-1A / CBS 708.71 / DSM 1257 / FGSC 987)</name>
    <dbReference type="NCBI Taxonomy" id="367110"/>
    <lineage>
        <taxon>Eukaryota</taxon>
        <taxon>Fungi</taxon>
        <taxon>Dikarya</taxon>
        <taxon>Ascomycota</taxon>
        <taxon>Pezizomycotina</taxon>
        <taxon>Sordariomycetes</taxon>
        <taxon>Sordariomycetidae</taxon>
        <taxon>Sordariales</taxon>
        <taxon>Sordariaceae</taxon>
        <taxon>Neurospora</taxon>
    </lineage>
</organism>
<reference key="1">
    <citation type="journal article" date="1995" name="Mol. Gen. Genet.">
        <title>The cpc-2 gene of Neurospora crassa encodes a protein entirely composed of WD-repeat segments that is involved in general amino acid control and female fertility.</title>
        <authorList>
            <person name="Mueller F."/>
            <person name="Krueger D."/>
            <person name="Sattlegger E."/>
            <person name="Hoffmann B."/>
            <person name="Ballario P."/>
            <person name="Kanaan M."/>
            <person name="Barthelmess I.B."/>
        </authorList>
    </citation>
    <scope>NUCLEOTIDE SEQUENCE [GENOMIC DNA]</scope>
    <scope>FUNCTION</scope>
    <source>
        <strain>ATCC 24698 / 74-OR23-1A / CBS 708.71 / DSM 1257 / FGSC 987</strain>
    </source>
</reference>
<reference key="2">
    <citation type="journal article" date="2003" name="Nature">
        <title>The genome sequence of the filamentous fungus Neurospora crassa.</title>
        <authorList>
            <person name="Galagan J.E."/>
            <person name="Calvo S.E."/>
            <person name="Borkovich K.A."/>
            <person name="Selker E.U."/>
            <person name="Read N.D."/>
            <person name="Jaffe D.B."/>
            <person name="FitzHugh W."/>
            <person name="Ma L.-J."/>
            <person name="Smirnov S."/>
            <person name="Purcell S."/>
            <person name="Rehman B."/>
            <person name="Elkins T."/>
            <person name="Engels R."/>
            <person name="Wang S."/>
            <person name="Nielsen C.B."/>
            <person name="Butler J."/>
            <person name="Endrizzi M."/>
            <person name="Qui D."/>
            <person name="Ianakiev P."/>
            <person name="Bell-Pedersen D."/>
            <person name="Nelson M.A."/>
            <person name="Werner-Washburne M."/>
            <person name="Selitrennikoff C.P."/>
            <person name="Kinsey J.A."/>
            <person name="Braun E.L."/>
            <person name="Zelter A."/>
            <person name="Schulte U."/>
            <person name="Kothe G.O."/>
            <person name="Jedd G."/>
            <person name="Mewes H.-W."/>
            <person name="Staben C."/>
            <person name="Marcotte E."/>
            <person name="Greenberg D."/>
            <person name="Roy A."/>
            <person name="Foley K."/>
            <person name="Naylor J."/>
            <person name="Stange-Thomann N."/>
            <person name="Barrett R."/>
            <person name="Gnerre S."/>
            <person name="Kamal M."/>
            <person name="Kamvysselis M."/>
            <person name="Mauceli E.W."/>
            <person name="Bielke C."/>
            <person name="Rudd S."/>
            <person name="Frishman D."/>
            <person name="Krystofova S."/>
            <person name="Rasmussen C."/>
            <person name="Metzenberg R.L."/>
            <person name="Perkins D.D."/>
            <person name="Kroken S."/>
            <person name="Cogoni C."/>
            <person name="Macino G."/>
            <person name="Catcheside D.E.A."/>
            <person name="Li W."/>
            <person name="Pratt R.J."/>
            <person name="Osmani S.A."/>
            <person name="DeSouza C.P.C."/>
            <person name="Glass N.L."/>
            <person name="Orbach M.J."/>
            <person name="Berglund J.A."/>
            <person name="Voelker R."/>
            <person name="Yarden O."/>
            <person name="Plamann M."/>
            <person name="Seiler S."/>
            <person name="Dunlap J.C."/>
            <person name="Radford A."/>
            <person name="Aramayo R."/>
            <person name="Natvig D.O."/>
            <person name="Alex L.A."/>
            <person name="Mannhaupt G."/>
            <person name="Ebbole D.J."/>
            <person name="Freitag M."/>
            <person name="Paulsen I."/>
            <person name="Sachs M.S."/>
            <person name="Lander E.S."/>
            <person name="Nusbaum C."/>
            <person name="Birren B.W."/>
        </authorList>
    </citation>
    <scope>NUCLEOTIDE SEQUENCE [LARGE SCALE GENOMIC DNA]</scope>
    <source>
        <strain>ATCC 24698 / 74-OR23-1A / CBS 708.71 / DSM 1257 / FGSC 987</strain>
    </source>
</reference>
<reference evidence="6" key="3">
    <citation type="journal article" date="2021" name="Proc. Natl. Acad. Sci. U.S.A.">
        <title>Structure of the translating Neurospora ribosome arrested by cycloheximide.</title>
        <authorList>
            <person name="Shen L."/>
            <person name="Su Z."/>
            <person name="Yang K."/>
            <person name="Wu C."/>
            <person name="Becker T."/>
            <person name="Bell-Pedersen D."/>
            <person name="Zhang J."/>
            <person name="Sachs M.S."/>
        </authorList>
    </citation>
    <scope>STRUCTURE BY ELECTRON MICROSCOPY (2.70 ANGSTROMS)</scope>
</reference>
<gene>
    <name type="primary">cpc-2</name>
    <name type="ORF">NCU05810</name>
</gene>
<comment type="function">
    <text evidence="2 5">Component of the ribosome, a large ribonucleoprotein complex responsible for the synthesis of proteins in the cell. The small ribosomal subunit (SSU) binds messenger RNAs (mRNAs) and translates the encoded message by selecting cognate aminoacyl-transfer RNA (tRNA) molecules. The large subunit (LSU) contains the ribosomal catalytic site termed the peptidyl transferase center (PTC), which catalyzes the formation of peptide bonds, thereby polymerizing the amino acids delivered by tRNAs into a polypeptide chain. The nascent polypeptides leave the ribosome through a tunnel in the LSU and interact with protein factors that function in enzymatic processing, targeting, and the membrane insertion of nascent chains at the exit of the ribosomal tunnel (Probable). Required to activate general amino acid control under conditions of amino acid limitation in the vegetative growth phase, and for formation of protoperithecia in preparation for the sexual phase of the life cycle of N.crassa (PubMed:7651339).</text>
</comment>
<comment type="subunit">
    <text evidence="1">Component of the small ribosomal subunit (SSU). Mature N.crassa ribosomes consist of a small (40S) and a large (60S) subunit. The 40S small subunit contains 1 molecule of ribosomal RNA (18S rRNA) and at least 32 different proteins. The large 60S subunit contains 3 rRNA molecules (26S, 5.8S and 5S rRNA) and at least 42 different proteins.</text>
</comment>
<comment type="subcellular location">
    <subcellularLocation>
        <location evidence="1">Cytoplasm</location>
    </subcellularLocation>
</comment>
<comment type="similarity">
    <text evidence="4">Belongs to the WD repeat G protein beta family. Ribosomal protein RACK1 subfamily.</text>
</comment>
<proteinExistence type="evidence at protein level"/>
<evidence type="ECO:0000269" key="1">
    <source>
    </source>
</evidence>
<evidence type="ECO:0000269" key="2">
    <source>
    </source>
</evidence>
<evidence type="ECO:0000303" key="3">
    <source>
    </source>
</evidence>
<evidence type="ECO:0000305" key="4"/>
<evidence type="ECO:0000305" key="5">
    <source>
    </source>
</evidence>
<evidence type="ECO:0007744" key="6">
    <source>
        <dbReference type="PDB" id="7R81"/>
    </source>
</evidence>
<name>GBLP_NEUCR</name>